<proteinExistence type="evidence at transcript level"/>
<evidence type="ECO:0000255" key="1"/>
<evidence type="ECO:0000305" key="2"/>
<reference key="1">
    <citation type="journal article" date="2000" name="DNA Res.">
        <title>Structural analysis of Arabidopsis thaliana chromosome 3. II. Sequence features of the 4,251,695 bp regions covered by 90 P1, TAC and BAC clones.</title>
        <authorList>
            <person name="Kaneko T."/>
            <person name="Katoh T."/>
            <person name="Sato S."/>
            <person name="Nakamura Y."/>
            <person name="Asamizu E."/>
            <person name="Tabata S."/>
        </authorList>
    </citation>
    <scope>NUCLEOTIDE SEQUENCE [LARGE SCALE GENOMIC DNA]</scope>
    <source>
        <strain>cv. Columbia</strain>
    </source>
</reference>
<reference key="2">
    <citation type="journal article" date="2017" name="Plant J.">
        <title>Araport11: a complete reannotation of the Arabidopsis thaliana reference genome.</title>
        <authorList>
            <person name="Cheng C.Y."/>
            <person name="Krishnakumar V."/>
            <person name="Chan A.P."/>
            <person name="Thibaud-Nissen F."/>
            <person name="Schobel S."/>
            <person name="Town C.D."/>
        </authorList>
    </citation>
    <scope>GENOME REANNOTATION</scope>
    <source>
        <strain>cv. Columbia</strain>
    </source>
</reference>
<reference key="3">
    <citation type="journal article" date="2003" name="Science">
        <title>Empirical analysis of transcriptional activity in the Arabidopsis genome.</title>
        <authorList>
            <person name="Yamada K."/>
            <person name="Lim J."/>
            <person name="Dale J.M."/>
            <person name="Chen H."/>
            <person name="Shinn P."/>
            <person name="Palm C.J."/>
            <person name="Southwick A.M."/>
            <person name="Wu H.C."/>
            <person name="Kim C.J."/>
            <person name="Nguyen M."/>
            <person name="Pham P.K."/>
            <person name="Cheuk R.F."/>
            <person name="Karlin-Newmann G."/>
            <person name="Liu S.X."/>
            <person name="Lam B."/>
            <person name="Sakano H."/>
            <person name="Wu T."/>
            <person name="Yu G."/>
            <person name="Miranda M."/>
            <person name="Quach H.L."/>
            <person name="Tripp M."/>
            <person name="Chang C.H."/>
            <person name="Lee J.M."/>
            <person name="Toriumi M.J."/>
            <person name="Chan M.M."/>
            <person name="Tang C.C."/>
            <person name="Onodera C.S."/>
            <person name="Deng J.M."/>
            <person name="Akiyama K."/>
            <person name="Ansari Y."/>
            <person name="Arakawa T."/>
            <person name="Banh J."/>
            <person name="Banno F."/>
            <person name="Bowser L."/>
            <person name="Brooks S.Y."/>
            <person name="Carninci P."/>
            <person name="Chao Q."/>
            <person name="Choy N."/>
            <person name="Enju A."/>
            <person name="Goldsmith A.D."/>
            <person name="Gurjal M."/>
            <person name="Hansen N.F."/>
            <person name="Hayashizaki Y."/>
            <person name="Johnson-Hopson C."/>
            <person name="Hsuan V.W."/>
            <person name="Iida K."/>
            <person name="Karnes M."/>
            <person name="Khan S."/>
            <person name="Koesema E."/>
            <person name="Ishida J."/>
            <person name="Jiang P.X."/>
            <person name="Jones T."/>
            <person name="Kawai J."/>
            <person name="Kamiya A."/>
            <person name="Meyers C."/>
            <person name="Nakajima M."/>
            <person name="Narusaka M."/>
            <person name="Seki M."/>
            <person name="Sakurai T."/>
            <person name="Satou M."/>
            <person name="Tamse R."/>
            <person name="Vaysberg M."/>
            <person name="Wallender E.K."/>
            <person name="Wong C."/>
            <person name="Yamamura Y."/>
            <person name="Yuan S."/>
            <person name="Shinozaki K."/>
            <person name="Davis R.W."/>
            <person name="Theologis A."/>
            <person name="Ecker J.R."/>
        </authorList>
    </citation>
    <scope>NUCLEOTIDE SEQUENCE [LARGE SCALE MRNA]</scope>
    <source>
        <strain>cv. Columbia</strain>
    </source>
</reference>
<organism>
    <name type="scientific">Arabidopsis thaliana</name>
    <name type="common">Mouse-ear cress</name>
    <dbReference type="NCBI Taxonomy" id="3702"/>
    <lineage>
        <taxon>Eukaryota</taxon>
        <taxon>Viridiplantae</taxon>
        <taxon>Streptophyta</taxon>
        <taxon>Embryophyta</taxon>
        <taxon>Tracheophyta</taxon>
        <taxon>Spermatophyta</taxon>
        <taxon>Magnoliopsida</taxon>
        <taxon>eudicotyledons</taxon>
        <taxon>Gunneridae</taxon>
        <taxon>Pentapetalae</taxon>
        <taxon>rosids</taxon>
        <taxon>malvids</taxon>
        <taxon>Brassicales</taxon>
        <taxon>Brassicaceae</taxon>
        <taxon>Camelineae</taxon>
        <taxon>Arabidopsis</taxon>
    </lineage>
</organism>
<protein>
    <recommendedName>
        <fullName>Kelch repeat-containing protein At3g27220</fullName>
    </recommendedName>
</protein>
<accession>Q9LK31</accession>
<accession>Q93ZP9</accession>
<dbReference type="EMBL" id="AP000381">
    <property type="protein sequence ID" value="BAB02117.1"/>
    <property type="molecule type" value="Genomic_DNA"/>
</dbReference>
<dbReference type="EMBL" id="CP002686">
    <property type="protein sequence ID" value="AEE77280.1"/>
    <property type="molecule type" value="Genomic_DNA"/>
</dbReference>
<dbReference type="EMBL" id="AY048270">
    <property type="protein sequence ID" value="AAK82532.1"/>
    <property type="molecule type" value="mRNA"/>
</dbReference>
<dbReference type="EMBL" id="BT000591">
    <property type="protein sequence ID" value="AAN18160.1"/>
    <property type="molecule type" value="mRNA"/>
</dbReference>
<dbReference type="EMBL" id="AY056400">
    <property type="protein sequence ID" value="AAL08256.1"/>
    <property type="molecule type" value="mRNA"/>
</dbReference>
<dbReference type="RefSeq" id="NP_566812.1">
    <property type="nucleotide sequence ID" value="NM_113636.4"/>
</dbReference>
<dbReference type="SMR" id="Q9LK31"/>
<dbReference type="BioGRID" id="7671">
    <property type="interactions" value="3"/>
</dbReference>
<dbReference type="STRING" id="3702.Q9LK31"/>
<dbReference type="PaxDb" id="3702-AT3G27220.1"/>
<dbReference type="ProteomicsDB" id="232370"/>
<dbReference type="EnsemblPlants" id="AT3G27220.1">
    <property type="protein sequence ID" value="AT3G27220.1"/>
    <property type="gene ID" value="AT3G27220"/>
</dbReference>
<dbReference type="GeneID" id="822341"/>
<dbReference type="Gramene" id="AT3G27220.1">
    <property type="protein sequence ID" value="AT3G27220.1"/>
    <property type="gene ID" value="AT3G27220"/>
</dbReference>
<dbReference type="KEGG" id="ath:AT3G27220"/>
<dbReference type="Araport" id="AT3G27220"/>
<dbReference type="TAIR" id="AT3G27220"/>
<dbReference type="eggNOG" id="KOG1072">
    <property type="taxonomic scope" value="Eukaryota"/>
</dbReference>
<dbReference type="HOGENOM" id="CLU_056092_0_0_1"/>
<dbReference type="InParanoid" id="Q9LK31"/>
<dbReference type="OMA" id="FWNGYLY"/>
<dbReference type="OrthoDB" id="191037at2759"/>
<dbReference type="PhylomeDB" id="Q9LK31"/>
<dbReference type="PRO" id="PR:Q9LK31"/>
<dbReference type="Proteomes" id="UP000006548">
    <property type="component" value="Chromosome 3"/>
</dbReference>
<dbReference type="ExpressionAtlas" id="Q9LK31">
    <property type="expression patterns" value="baseline and differential"/>
</dbReference>
<dbReference type="GO" id="GO:0005768">
    <property type="term" value="C:endosome"/>
    <property type="evidence" value="ECO:0007005"/>
    <property type="project" value="TAIR"/>
</dbReference>
<dbReference type="GO" id="GO:0005794">
    <property type="term" value="C:Golgi apparatus"/>
    <property type="evidence" value="ECO:0007005"/>
    <property type="project" value="TAIR"/>
</dbReference>
<dbReference type="GO" id="GO:0005797">
    <property type="term" value="C:Golgi medial cisterna"/>
    <property type="evidence" value="ECO:0007005"/>
    <property type="project" value="TAIR"/>
</dbReference>
<dbReference type="GO" id="GO:0016020">
    <property type="term" value="C:membrane"/>
    <property type="evidence" value="ECO:0007669"/>
    <property type="project" value="UniProtKB-SubCell"/>
</dbReference>
<dbReference type="GO" id="GO:0005802">
    <property type="term" value="C:trans-Golgi network"/>
    <property type="evidence" value="ECO:0007005"/>
    <property type="project" value="TAIR"/>
</dbReference>
<dbReference type="GO" id="GO:0009061">
    <property type="term" value="P:anaerobic respiration"/>
    <property type="evidence" value="ECO:0000315"/>
    <property type="project" value="TAIR"/>
</dbReference>
<dbReference type="GO" id="GO:0071456">
    <property type="term" value="P:cellular response to hypoxia"/>
    <property type="evidence" value="ECO:0007007"/>
    <property type="project" value="TAIR"/>
</dbReference>
<dbReference type="FunFam" id="2.120.10.80:FF:000087">
    <property type="entry name" value="Kelch repeat-containing protein"/>
    <property type="match status" value="1"/>
</dbReference>
<dbReference type="FunFam" id="2.120.10.80:FF:000168">
    <property type="entry name" value="Kelch repeat-containing protein At3g27220"/>
    <property type="match status" value="1"/>
</dbReference>
<dbReference type="Gene3D" id="2.120.10.80">
    <property type="entry name" value="Kelch-type beta propeller"/>
    <property type="match status" value="2"/>
</dbReference>
<dbReference type="InterPro" id="IPR015915">
    <property type="entry name" value="Kelch-typ_b-propeller"/>
</dbReference>
<dbReference type="InterPro" id="IPR053256">
    <property type="entry name" value="Kelch_repeat-containing"/>
</dbReference>
<dbReference type="PANTHER" id="PTHR46773">
    <property type="match status" value="1"/>
</dbReference>
<dbReference type="PANTHER" id="PTHR46773:SF3">
    <property type="entry name" value="OS08G0128000 PROTEIN"/>
    <property type="match status" value="1"/>
</dbReference>
<dbReference type="Pfam" id="PF13418">
    <property type="entry name" value="Kelch_4"/>
    <property type="match status" value="1"/>
</dbReference>
<dbReference type="SUPFAM" id="SSF117281">
    <property type="entry name" value="Kelch motif"/>
    <property type="match status" value="2"/>
</dbReference>
<comment type="subcellular location">
    <subcellularLocation>
        <location evidence="1">Membrane</location>
        <topology evidence="1">Single-pass membrane protein</topology>
    </subcellularLocation>
</comment>
<sequence length="426" mass="48496">MANKPDHHHHHHQSSRRLMLVLYFTSVLGIGFIAAFLCLSSSIPSVSAVFSIWVPVNRPEIQIPIIDSKIVQKRSKQSNDTKDHVRFLSAIFADIPAPELKWEEMESAPVPRLDGYSVQINNLLYVFSGYGSLDYVHSHVDVFNFTDNKWCDRFHTPKEMANSHLGIVTDGRYVYVVSGQLGPQCRGPTSRSFVLDSFTKTWLEFPSLPAPRYAPATQIWRGRLHVMGGSKENRNAVAFDHWSIAVKDGKALDEWREEVPIPRGGPHRACVVANDKLLVIGGQEGDFMAKPNSPIFKCSRRREIFNGEVYMMDEEMKWKMLPPMPKNNSHIESAWIIVNNSIVIVGGTTDWHPVTKRLVLVGEIFRFQLDTLTWSVIGRLPYRVKTAMAGFWNGYLYFTSGQRDRGPDNPQPGKVIGEMWRTKLKF</sequence>
<keyword id="KW-0880">Kelch repeat</keyword>
<keyword id="KW-0472">Membrane</keyword>
<keyword id="KW-1185">Reference proteome</keyword>
<keyword id="KW-0677">Repeat</keyword>
<keyword id="KW-0812">Transmembrane</keyword>
<keyword id="KW-1133">Transmembrane helix</keyword>
<gene>
    <name type="ordered locus">At3g27220</name>
    <name type="ORF">K17E12.4</name>
</gene>
<feature type="chain" id="PRO_0000300098" description="Kelch repeat-containing protein At3g27220">
    <location>
        <begin position="1"/>
        <end position="426"/>
    </location>
</feature>
<feature type="transmembrane region" description="Helical" evidence="1">
    <location>
        <begin position="18"/>
        <end position="38"/>
    </location>
</feature>
<feature type="repeat" description="Kelch 1">
    <location>
        <begin position="123"/>
        <end position="170"/>
    </location>
</feature>
<feature type="repeat" description="Kelch 2">
    <location>
        <begin position="173"/>
        <end position="222"/>
    </location>
</feature>
<feature type="repeat" description="Kelch 3">
    <location>
        <begin position="224"/>
        <end position="275"/>
    </location>
</feature>
<feature type="repeat" description="Kelch 4">
    <location>
        <begin position="276"/>
        <end position="338"/>
    </location>
</feature>
<feature type="repeat" description="Kelch 5">
    <location>
        <begin position="341"/>
        <end position="394"/>
    </location>
</feature>
<feature type="sequence conflict" description="In Ref. 3; AAL08256." evidence="2" ref="3">
    <original>R</original>
    <variation>H</variation>
    <location>
        <position position="300"/>
    </location>
</feature>
<name>Y3272_ARATH</name>